<proteinExistence type="inferred from homology"/>
<keyword id="KW-0012">Acyltransferase</keyword>
<keyword id="KW-0256">Endoplasmic reticulum</keyword>
<keyword id="KW-0325">Glycoprotein</keyword>
<keyword id="KW-0337">GPI-anchor biosynthesis</keyword>
<keyword id="KW-0472">Membrane</keyword>
<keyword id="KW-1185">Reference proteome</keyword>
<keyword id="KW-0808">Transferase</keyword>
<keyword id="KW-0812">Transmembrane</keyword>
<keyword id="KW-1133">Transmembrane helix</keyword>
<protein>
    <recommendedName>
        <fullName>GPI-anchored wall transfer protein 1</fullName>
        <ecNumber>2.3.-.-</ecNumber>
    </recommendedName>
</protein>
<comment type="function">
    <text evidence="1">Probable acetyltransferase, which acetylates the inositol ring of phosphatidylinositol during biosynthesis of GPI-anchor.</text>
</comment>
<comment type="pathway">
    <text>Glycolipid biosynthesis; glycosylphosphatidylinositol-anchor biosynthesis.</text>
</comment>
<comment type="subcellular location">
    <subcellularLocation>
        <location evidence="1">Endoplasmic reticulum membrane</location>
        <topology evidence="1">Multi-pass membrane protein</topology>
    </subcellularLocation>
</comment>
<comment type="similarity">
    <text evidence="3">Belongs to the PIGW family.</text>
</comment>
<feature type="chain" id="PRO_0000246289" description="GPI-anchored wall transfer protein 1">
    <location>
        <begin position="1"/>
        <end position="493"/>
    </location>
</feature>
<feature type="transmembrane region" description="Helical" evidence="2">
    <location>
        <begin position="15"/>
        <end position="35"/>
    </location>
</feature>
<feature type="transmembrane region" description="Helical" evidence="2">
    <location>
        <begin position="48"/>
        <end position="68"/>
    </location>
</feature>
<feature type="transmembrane region" description="Helical" evidence="2">
    <location>
        <begin position="70"/>
        <end position="90"/>
    </location>
</feature>
<feature type="transmembrane region" description="Helical" evidence="2">
    <location>
        <begin position="122"/>
        <end position="142"/>
    </location>
</feature>
<feature type="transmembrane region" description="Helical" evidence="2">
    <location>
        <begin position="156"/>
        <end position="176"/>
    </location>
</feature>
<feature type="transmembrane region" description="Helical" evidence="2">
    <location>
        <begin position="201"/>
        <end position="221"/>
    </location>
</feature>
<feature type="transmembrane region" description="Helical" evidence="2">
    <location>
        <begin position="244"/>
        <end position="264"/>
    </location>
</feature>
<feature type="transmembrane region" description="Helical" evidence="2">
    <location>
        <begin position="268"/>
        <end position="288"/>
    </location>
</feature>
<feature type="transmembrane region" description="Helical" evidence="2">
    <location>
        <begin position="309"/>
        <end position="329"/>
    </location>
</feature>
<feature type="transmembrane region" description="Helical" evidence="2">
    <location>
        <begin position="366"/>
        <end position="386"/>
    </location>
</feature>
<feature type="transmembrane region" description="Helical" evidence="2">
    <location>
        <begin position="396"/>
        <end position="416"/>
    </location>
</feature>
<feature type="transmembrane region" description="Helical" evidence="2">
    <location>
        <begin position="439"/>
        <end position="459"/>
    </location>
</feature>
<feature type="transmembrane region" description="Helical" evidence="2">
    <location>
        <begin position="464"/>
        <end position="484"/>
    </location>
</feature>
<feature type="glycosylation site" description="N-linked (GlcNAc...) asparagine" evidence="2">
    <location>
        <position position="395"/>
    </location>
</feature>
<accession>Q6BTT3</accession>
<reference key="1">
    <citation type="journal article" date="2004" name="Nature">
        <title>Genome evolution in yeasts.</title>
        <authorList>
            <person name="Dujon B."/>
            <person name="Sherman D."/>
            <person name="Fischer G."/>
            <person name="Durrens P."/>
            <person name="Casaregola S."/>
            <person name="Lafontaine I."/>
            <person name="de Montigny J."/>
            <person name="Marck C."/>
            <person name="Neuveglise C."/>
            <person name="Talla E."/>
            <person name="Goffard N."/>
            <person name="Frangeul L."/>
            <person name="Aigle M."/>
            <person name="Anthouard V."/>
            <person name="Babour A."/>
            <person name="Barbe V."/>
            <person name="Barnay S."/>
            <person name="Blanchin S."/>
            <person name="Beckerich J.-M."/>
            <person name="Beyne E."/>
            <person name="Bleykasten C."/>
            <person name="Boisrame A."/>
            <person name="Boyer J."/>
            <person name="Cattolico L."/>
            <person name="Confanioleri F."/>
            <person name="de Daruvar A."/>
            <person name="Despons L."/>
            <person name="Fabre E."/>
            <person name="Fairhead C."/>
            <person name="Ferry-Dumazet H."/>
            <person name="Groppi A."/>
            <person name="Hantraye F."/>
            <person name="Hennequin C."/>
            <person name="Jauniaux N."/>
            <person name="Joyet P."/>
            <person name="Kachouri R."/>
            <person name="Kerrest A."/>
            <person name="Koszul R."/>
            <person name="Lemaire M."/>
            <person name="Lesur I."/>
            <person name="Ma L."/>
            <person name="Muller H."/>
            <person name="Nicaud J.-M."/>
            <person name="Nikolski M."/>
            <person name="Oztas S."/>
            <person name="Ozier-Kalogeropoulos O."/>
            <person name="Pellenz S."/>
            <person name="Potier S."/>
            <person name="Richard G.-F."/>
            <person name="Straub M.-L."/>
            <person name="Suleau A."/>
            <person name="Swennen D."/>
            <person name="Tekaia F."/>
            <person name="Wesolowski-Louvel M."/>
            <person name="Westhof E."/>
            <person name="Wirth B."/>
            <person name="Zeniou-Meyer M."/>
            <person name="Zivanovic Y."/>
            <person name="Bolotin-Fukuhara M."/>
            <person name="Thierry A."/>
            <person name="Bouchier C."/>
            <person name="Caudron B."/>
            <person name="Scarpelli C."/>
            <person name="Gaillardin C."/>
            <person name="Weissenbach J."/>
            <person name="Wincker P."/>
            <person name="Souciet J.-L."/>
        </authorList>
    </citation>
    <scope>NUCLEOTIDE SEQUENCE [LARGE SCALE GENOMIC DNA]</scope>
    <source>
        <strain>ATCC 36239 / CBS 767 / BCRC 21394 / JCM 1990 / NBRC 0083 / IGC 2968</strain>
    </source>
</reference>
<gene>
    <name type="primary">GWT1</name>
    <name type="ordered locus">DEHA2C16082g</name>
</gene>
<name>GWT1_DEBHA</name>
<organism>
    <name type="scientific">Debaryomyces hansenii (strain ATCC 36239 / CBS 767 / BCRC 21394 / JCM 1990 / NBRC 0083 / IGC 2968)</name>
    <name type="common">Yeast</name>
    <name type="synonym">Torulaspora hansenii</name>
    <dbReference type="NCBI Taxonomy" id="284592"/>
    <lineage>
        <taxon>Eukaryota</taxon>
        <taxon>Fungi</taxon>
        <taxon>Dikarya</taxon>
        <taxon>Ascomycota</taxon>
        <taxon>Saccharomycotina</taxon>
        <taxon>Pichiomycetes</taxon>
        <taxon>Debaryomycetaceae</taxon>
        <taxon>Debaryomyces</taxon>
    </lineage>
</organism>
<dbReference type="EC" id="2.3.-.-"/>
<dbReference type="EMBL" id="CR382135">
    <property type="protein sequence ID" value="CAG86468.2"/>
    <property type="molecule type" value="Genomic_DNA"/>
</dbReference>
<dbReference type="RefSeq" id="XP_458386.2">
    <property type="nucleotide sequence ID" value="XM_458386.1"/>
</dbReference>
<dbReference type="SMR" id="Q6BTT3"/>
<dbReference type="FunCoup" id="Q6BTT3">
    <property type="interactions" value="586"/>
</dbReference>
<dbReference type="STRING" id="284592.Q6BTT3"/>
<dbReference type="GlyCosmos" id="Q6BTT3">
    <property type="glycosylation" value="1 site, No reported glycans"/>
</dbReference>
<dbReference type="GeneID" id="2900457"/>
<dbReference type="KEGG" id="dha:DEHA2C16082g"/>
<dbReference type="VEuPathDB" id="FungiDB:DEHA2C16082g"/>
<dbReference type="eggNOG" id="KOG0411">
    <property type="taxonomic scope" value="Eukaryota"/>
</dbReference>
<dbReference type="HOGENOM" id="CLU_020802_2_2_1"/>
<dbReference type="InParanoid" id="Q6BTT3"/>
<dbReference type="OMA" id="GLYVMQP"/>
<dbReference type="OrthoDB" id="15270at2759"/>
<dbReference type="UniPathway" id="UPA00196"/>
<dbReference type="Proteomes" id="UP000000599">
    <property type="component" value="Chromosome C"/>
</dbReference>
<dbReference type="GO" id="GO:0005789">
    <property type="term" value="C:endoplasmic reticulum membrane"/>
    <property type="evidence" value="ECO:0007669"/>
    <property type="project" value="UniProtKB-SubCell"/>
</dbReference>
<dbReference type="GO" id="GO:0032216">
    <property type="term" value="F:glucosaminyl-phosphatidylinositol O-acyltransferase activity"/>
    <property type="evidence" value="ECO:0007669"/>
    <property type="project" value="TreeGrafter"/>
</dbReference>
<dbReference type="GO" id="GO:0006506">
    <property type="term" value="P:GPI anchor biosynthetic process"/>
    <property type="evidence" value="ECO:0007669"/>
    <property type="project" value="UniProtKB-UniPathway"/>
</dbReference>
<dbReference type="GO" id="GO:0072659">
    <property type="term" value="P:protein localization to plasma membrane"/>
    <property type="evidence" value="ECO:0007669"/>
    <property type="project" value="TreeGrafter"/>
</dbReference>
<dbReference type="InterPro" id="IPR009447">
    <property type="entry name" value="PIGW/GWT1"/>
</dbReference>
<dbReference type="PANTHER" id="PTHR20661">
    <property type="entry name" value="PHOSPHATIDYLINOSITOL-GLYCAN BIOSYNTHESIS CLASS W PROTEIN"/>
    <property type="match status" value="1"/>
</dbReference>
<dbReference type="PANTHER" id="PTHR20661:SF0">
    <property type="entry name" value="PHOSPHATIDYLINOSITOL-GLYCAN BIOSYNTHESIS CLASS W PROTEIN"/>
    <property type="match status" value="1"/>
</dbReference>
<dbReference type="Pfam" id="PF06423">
    <property type="entry name" value="GWT1"/>
    <property type="match status" value="1"/>
</dbReference>
<dbReference type="PIRSF" id="PIRSF017321">
    <property type="entry name" value="GWT1"/>
    <property type="match status" value="1"/>
</dbReference>
<sequence>MSSLKEQKELFVSNLLGGSISETYNVTAVALSAYLSYNLISSYLDYKITFPVDFILNCMTILLSITLYSNSTNTLHLLILVPGILAAIVGRWGQKDVKKSRSKKPRDAKGTKTEKQLLVKKPFITAYRSHMLVITNFAILAVDFRMFPRRFAKVETWGTSLMDLGVGSFVFSMGLASSRAIIKQRFDSSKSTDYRFKLSQYVSLIMKNSIKTLPVLALGLIRLVSVKTLEYQEHVTEYGVHWNFFITLGLLPIFFGIIDPVLNFVPRFVVALVICIGYEVLMVKTDLLSFILRSDNRMESLVTMNKEGIFSFIGYFSIFIFGQSFGSFVLTGFKTPNNLFRMCSYQQYKKAGAKSGLFTVTSTQGLLIATLFSQALFWYVQEAYFVSSISRRLANLSYVLWVVSYNSTLLLGYNLIESVVAKPEAADSKILNAFNNNGLLSFLLGNLLTGLTNMTINTLGCNAPVTFAILVTYGLVLSIIAVTLDRYGIYIKL</sequence>
<evidence type="ECO:0000250" key="1"/>
<evidence type="ECO:0000255" key="2"/>
<evidence type="ECO:0000305" key="3"/>